<name>CALYP_DROSE</name>
<protein>
    <recommendedName>
        <fullName evidence="1">Ubiquitin carboxyl-terminal hydrolase calypso</fullName>
        <ecNumber evidence="1">3.4.19.12</ecNumber>
    </recommendedName>
    <alternativeName>
        <fullName evidence="1">BRCA1-associated protein 1 homolog</fullName>
        <shortName evidence="1">BAP1 homolog</shortName>
    </alternativeName>
    <alternativeName>
        <fullName evidence="1">Polycomb group protein calypso</fullName>
    </alternativeName>
</protein>
<proteinExistence type="inferred from homology"/>
<feature type="chain" id="PRO_0000395832" description="Ubiquitin carboxyl-terminal hydrolase calypso">
    <location>
        <begin position="1"/>
        <end position="471"/>
    </location>
</feature>
<feature type="domain" description="UCH catalytic" evidence="2">
    <location>
        <begin position="45"/>
        <end position="276"/>
    </location>
</feature>
<feature type="domain" description="ULD" evidence="3">
    <location>
        <begin position="375"/>
        <end position="403"/>
    </location>
</feature>
<feature type="region of interest" description="Disordered" evidence="4">
    <location>
        <begin position="307"/>
        <end position="326"/>
    </location>
</feature>
<feature type="region of interest" description="Positively charged C-terminal tail required for binding nucleosomes" evidence="1">
    <location>
        <begin position="405"/>
        <end position="471"/>
    </location>
</feature>
<feature type="region of interest" description="Disordered" evidence="4">
    <location>
        <begin position="412"/>
        <end position="471"/>
    </location>
</feature>
<feature type="compositionally biased region" description="Polar residues" evidence="4">
    <location>
        <begin position="314"/>
        <end position="326"/>
    </location>
</feature>
<feature type="compositionally biased region" description="Low complexity" evidence="4">
    <location>
        <begin position="422"/>
        <end position="447"/>
    </location>
</feature>
<feature type="compositionally biased region" description="Basic residues" evidence="4">
    <location>
        <begin position="457"/>
        <end position="471"/>
    </location>
</feature>
<feature type="active site" description="Nucleophile" evidence="2">
    <location>
        <position position="131"/>
    </location>
</feature>
<feature type="active site" description="Proton donor" evidence="2">
    <location>
        <position position="213"/>
    </location>
</feature>
<feature type="site" description="Transition state stabilizer" evidence="2">
    <location>
        <position position="125"/>
    </location>
</feature>
<feature type="site" description="Important for enzyme activity" evidence="2">
    <location>
        <position position="228"/>
    </location>
</feature>
<dbReference type="EC" id="3.4.19.12" evidence="1"/>
<dbReference type="EMBL" id="CH480816">
    <property type="protein sequence ID" value="EDW48094.1"/>
    <property type="molecule type" value="Genomic_DNA"/>
</dbReference>
<dbReference type="SMR" id="B4HST0"/>
<dbReference type="STRING" id="7238.B4HST0"/>
<dbReference type="MEROPS" id="C12.A09"/>
<dbReference type="EnsemblMetazoa" id="FBtr0203068">
    <property type="protein sequence ID" value="FBpp0201560"/>
    <property type="gene ID" value="FBgn0174966"/>
</dbReference>
<dbReference type="EnsemblMetazoa" id="XM_002034045.2">
    <property type="protein sequence ID" value="XP_002034081.1"/>
    <property type="gene ID" value="LOC6609392"/>
</dbReference>
<dbReference type="EnsemblMetazoa" id="XM_032716040.1">
    <property type="protein sequence ID" value="XP_032571931.1"/>
    <property type="gene ID" value="LOC6609392"/>
</dbReference>
<dbReference type="GeneID" id="6609392"/>
<dbReference type="KEGG" id="dse:6609392"/>
<dbReference type="CTD" id="136037741"/>
<dbReference type="HOGENOM" id="CLU_018316_2_1_1"/>
<dbReference type="OMA" id="MNHGCWE"/>
<dbReference type="OrthoDB" id="32587at7215"/>
<dbReference type="PhylomeDB" id="B4HST0"/>
<dbReference type="Proteomes" id="UP000001292">
    <property type="component" value="Unassembled WGS sequence"/>
</dbReference>
<dbReference type="GO" id="GO:0000785">
    <property type="term" value="C:chromatin"/>
    <property type="evidence" value="ECO:0000250"/>
    <property type="project" value="UniProtKB"/>
</dbReference>
<dbReference type="GO" id="GO:0005737">
    <property type="term" value="C:cytoplasm"/>
    <property type="evidence" value="ECO:0007669"/>
    <property type="project" value="TreeGrafter"/>
</dbReference>
<dbReference type="GO" id="GO:0035517">
    <property type="term" value="C:PR-DUB complex"/>
    <property type="evidence" value="ECO:0000250"/>
    <property type="project" value="UniProtKB"/>
</dbReference>
<dbReference type="GO" id="GO:0003682">
    <property type="term" value="F:chromatin binding"/>
    <property type="evidence" value="ECO:0000250"/>
    <property type="project" value="UniProtKB"/>
</dbReference>
<dbReference type="GO" id="GO:0004843">
    <property type="term" value="F:cysteine-type deubiquitinase activity"/>
    <property type="evidence" value="ECO:0000250"/>
    <property type="project" value="UniProtKB"/>
</dbReference>
<dbReference type="GO" id="GO:0040029">
    <property type="term" value="P:epigenetic regulation of gene expression"/>
    <property type="evidence" value="ECO:0000250"/>
    <property type="project" value="UniProtKB"/>
</dbReference>
<dbReference type="GO" id="GO:0031507">
    <property type="term" value="P:heterochromatin formation"/>
    <property type="evidence" value="ECO:0000250"/>
    <property type="project" value="UniProtKB"/>
</dbReference>
<dbReference type="GO" id="GO:0016579">
    <property type="term" value="P:protein deubiquitination"/>
    <property type="evidence" value="ECO:0007669"/>
    <property type="project" value="TreeGrafter"/>
</dbReference>
<dbReference type="GO" id="GO:0007385">
    <property type="term" value="P:specification of segmental identity, abdomen"/>
    <property type="evidence" value="ECO:0007669"/>
    <property type="project" value="EnsemblMetazoa"/>
</dbReference>
<dbReference type="GO" id="GO:0006511">
    <property type="term" value="P:ubiquitin-dependent protein catabolic process"/>
    <property type="evidence" value="ECO:0007669"/>
    <property type="project" value="InterPro"/>
</dbReference>
<dbReference type="CDD" id="cd09617">
    <property type="entry name" value="Peptidase_C12_UCH37_BAP1"/>
    <property type="match status" value="1"/>
</dbReference>
<dbReference type="FunFam" id="3.40.532.10:FF:000002">
    <property type="entry name" value="Ubiquitin carboxyl-terminal hydrolase"/>
    <property type="match status" value="1"/>
</dbReference>
<dbReference type="FunFam" id="1.20.58.860:FF:000004">
    <property type="entry name" value="Ubiquitin carboxyl-terminal hydrolase calypso"/>
    <property type="match status" value="1"/>
</dbReference>
<dbReference type="Gene3D" id="1.20.58.860">
    <property type="match status" value="1"/>
</dbReference>
<dbReference type="Gene3D" id="3.40.532.10">
    <property type="entry name" value="Peptidase C12, ubiquitin carboxyl-terminal hydrolase"/>
    <property type="match status" value="1"/>
</dbReference>
<dbReference type="InterPro" id="IPR038765">
    <property type="entry name" value="Papain-like_cys_pep_sf"/>
</dbReference>
<dbReference type="InterPro" id="IPR001578">
    <property type="entry name" value="Peptidase_C12_UCH"/>
</dbReference>
<dbReference type="InterPro" id="IPR036959">
    <property type="entry name" value="Peptidase_C12_UCH_sf"/>
</dbReference>
<dbReference type="InterPro" id="IPR041507">
    <property type="entry name" value="UCH_C"/>
</dbReference>
<dbReference type="PANTHER" id="PTHR10589">
    <property type="entry name" value="UBIQUITIN CARBOXYL-TERMINAL HYDROLASE"/>
    <property type="match status" value="1"/>
</dbReference>
<dbReference type="PANTHER" id="PTHR10589:SF28">
    <property type="entry name" value="UBIQUITIN CARBOXYL-TERMINAL HYDROLASE BAP1"/>
    <property type="match status" value="1"/>
</dbReference>
<dbReference type="Pfam" id="PF01088">
    <property type="entry name" value="Peptidase_C12"/>
    <property type="match status" value="1"/>
</dbReference>
<dbReference type="Pfam" id="PF18031">
    <property type="entry name" value="UCH_C"/>
    <property type="match status" value="1"/>
</dbReference>
<dbReference type="PRINTS" id="PR00707">
    <property type="entry name" value="UBCTHYDRLASE"/>
</dbReference>
<dbReference type="SUPFAM" id="SSF54001">
    <property type="entry name" value="Cysteine proteinases"/>
    <property type="match status" value="1"/>
</dbReference>
<dbReference type="PROSITE" id="PS52048">
    <property type="entry name" value="UCH_DOMAIN"/>
    <property type="match status" value="1"/>
</dbReference>
<dbReference type="PROSITE" id="PS52049">
    <property type="entry name" value="ULD"/>
    <property type="match status" value="1"/>
</dbReference>
<gene>
    <name evidence="1" type="primary">caly</name>
    <name evidence="1" type="synonym">BAP1</name>
    <name type="ORF">GM20083</name>
</gene>
<reference key="1">
    <citation type="journal article" date="2007" name="Nature">
        <title>Evolution of genes and genomes on the Drosophila phylogeny.</title>
        <authorList>
            <consortium name="Drosophila 12 genomes consortium"/>
        </authorList>
    </citation>
    <scope>NUCLEOTIDE SEQUENCE [LARGE SCALE GENOMIC DNA]</scope>
    <source>
        <strain>Rob3c / Tucson 14021-0248.25</strain>
    </source>
</reference>
<evidence type="ECO:0000250" key="1">
    <source>
        <dbReference type="UniProtKB" id="Q7K5N4"/>
    </source>
</evidence>
<evidence type="ECO:0000255" key="2">
    <source>
        <dbReference type="PROSITE-ProRule" id="PRU01393"/>
    </source>
</evidence>
<evidence type="ECO:0000255" key="3">
    <source>
        <dbReference type="PROSITE-ProRule" id="PRU01394"/>
    </source>
</evidence>
<evidence type="ECO:0000256" key="4">
    <source>
        <dbReference type="SAM" id="MobiDB-lite"/>
    </source>
</evidence>
<evidence type="ECO:0000305" key="5"/>
<keyword id="KW-0156">Chromatin regulator</keyword>
<keyword id="KW-0378">Hydrolase</keyword>
<keyword id="KW-0539">Nucleus</keyword>
<keyword id="KW-0645">Protease</keyword>
<keyword id="KW-1185">Reference proteome</keyword>
<keyword id="KW-0788">Thiol protease</keyword>
<keyword id="KW-0833">Ubl conjugation pathway</keyword>
<comment type="function">
    <text evidence="1">Catalytic component of the polycomb repressive deubiquitinase (PR-DUB) complex, a complex that specifically mediates deubiquitination of histone H2A monoubiquitinated at 'Lys-119' (H2AK118ub1). Mediates bisymmetric organization of the PR-DUB complex and is involved in association with nucleosomes to mediate deubiquitination. Does not deubiquitinate monoubiquitinated histone H2B. Required to maintain the transcriptionally repressive state of homeotic genes throughout development. The PR-DUB complex has weak or no activity toward 'Lys-48'- and 'Lys-63'-linked polyubiquitin chains. Polycomb group (PcG) protein.</text>
</comment>
<comment type="catalytic activity">
    <reaction evidence="1">
        <text>Thiol-dependent hydrolysis of ester, thioester, amide, peptide and isopeptide bonds formed by the C-terminal Gly of ubiquitin (a 76-residue protein attached to proteins as an intracellular targeting signal).</text>
        <dbReference type="EC" id="3.4.19.12"/>
    </reaction>
</comment>
<comment type="subunit">
    <text evidence="1">Catalytic component of the polycomb repressive deubiquitinase (PR-DUB) complex, at least composed of caly/calypso, Asx and sba (MBD5/6 homolog). The PR-DUB complex associates with nucleosomes to mediate deubiquitination of histone H2AK118ub1 substrates; the association requires the positively charged C-terminal tail of caly, probably due to direct binding of DNA. Interacts (via ULD domain) with Asx (via DEUBAD domain); the interaction produces a stable heterodimer with a composite binding site for ubiquitin. Homodimerizes (via coiled-coil hinge-region between the UCH and ULD domains) to mediate assembly of 2 copies of the caly-Asx heterodimer into a bisymmetric tetramer; dimerization enhances PR-DUB association with nucleosomes.</text>
</comment>
<comment type="subcellular location">
    <subcellularLocation>
        <location evidence="1">Nucleus</location>
    </subcellularLocation>
    <text evidence="1">Localizes to PcG response elements (PREs).</text>
</comment>
<comment type="similarity">
    <text evidence="5">Belongs to the peptidase C12 family. BAP1 subfamily.</text>
</comment>
<accession>B4HST0</accession>
<organism>
    <name type="scientific">Drosophila sechellia</name>
    <name type="common">Fruit fly</name>
    <dbReference type="NCBI Taxonomy" id="7238"/>
    <lineage>
        <taxon>Eukaryota</taxon>
        <taxon>Metazoa</taxon>
        <taxon>Ecdysozoa</taxon>
        <taxon>Arthropoda</taxon>
        <taxon>Hexapoda</taxon>
        <taxon>Insecta</taxon>
        <taxon>Pterygota</taxon>
        <taxon>Neoptera</taxon>
        <taxon>Endopterygota</taxon>
        <taxon>Diptera</taxon>
        <taxon>Brachycera</taxon>
        <taxon>Muscomorpha</taxon>
        <taxon>Ephydroidea</taxon>
        <taxon>Drosophilidae</taxon>
        <taxon>Drosophila</taxon>
        <taxon>Sophophora</taxon>
    </lineage>
</organism>
<sequence>MNAAGGGSGAQAAGVAAGNISLSHNALLSTASGATTMPMAQLADGWLELESDPGLFTLLLKDFGCHDVQVEEVYDLQKPIESPYGFIFLFRWIEERRARRKIVETTAEIFVKDEEAISSIFFAQQVVPNSCATHALLSVLLNCNENNLQLGDTLSRLKTHTKGMSPENKGLAIGNTPELACAHNSHAMPQARRRLERTGAGVSSCRFTGEAFHFVSFVPINGQLFELDGLKPYPMNHGGWEDSEDWTDKFRRVMAERLGIATGEQDIRFNLMAVVPDRRIAITHKLKMLRTNQAIVSGTLQKLLKADEQGESGNGDSQRPDTPTTLLEPSAFTARDLQSLLKNLDTEIAINEQHLTDENDRRHMFKVDASRRTHNYDKFICTFLSMLAHQGVLGELVSQHLLPSKKVSGQGAANRISKQSNTASAGGSTTGASASTPKTQQQQAAAAKNGKSPSKTPGRRRKGRNKCRKRK</sequence>